<gene>
    <name type="ordered locus">CLD_1535</name>
</gene>
<name>Y1535_CLOBK</name>
<feature type="chain" id="PRO_0000366304" description="UPF0735 ACT domain-containing protein CLD_1535">
    <location>
        <begin position="1"/>
        <end position="145"/>
    </location>
</feature>
<feature type="domain" description="ACT" evidence="1">
    <location>
        <begin position="69"/>
        <end position="144"/>
    </location>
</feature>
<reference key="1">
    <citation type="journal article" date="2007" name="PLoS ONE">
        <title>Analysis of the neurotoxin complex genes in Clostridium botulinum A1-A4 and B1 strains: BoNT/A3, /Ba4 and /B1 clusters are located within plasmids.</title>
        <authorList>
            <person name="Smith T.J."/>
            <person name="Hill K.K."/>
            <person name="Foley B.T."/>
            <person name="Detter J.C."/>
            <person name="Munk A.C."/>
            <person name="Bruce D.C."/>
            <person name="Doggett N.A."/>
            <person name="Smith L.A."/>
            <person name="Marks J.D."/>
            <person name="Xie G."/>
            <person name="Brettin T.S."/>
        </authorList>
    </citation>
    <scope>NUCLEOTIDE SEQUENCE [LARGE SCALE GENOMIC DNA]</scope>
    <source>
        <strain>Okra / Type B1</strain>
    </source>
</reference>
<dbReference type="EMBL" id="CP000939">
    <property type="protein sequence ID" value="ACA46047.1"/>
    <property type="molecule type" value="Genomic_DNA"/>
</dbReference>
<dbReference type="RefSeq" id="WP_003357848.1">
    <property type="nucleotide sequence ID" value="NC_010516.1"/>
</dbReference>
<dbReference type="KEGG" id="cbb:CLD_1535"/>
<dbReference type="HOGENOM" id="CLU_128147_0_0_9"/>
<dbReference type="Proteomes" id="UP000008541">
    <property type="component" value="Chromosome"/>
</dbReference>
<dbReference type="CDD" id="cd04888">
    <property type="entry name" value="ACT_PheB-BS"/>
    <property type="match status" value="1"/>
</dbReference>
<dbReference type="Gene3D" id="3.30.70.260">
    <property type="match status" value="1"/>
</dbReference>
<dbReference type="HAMAP" id="MF_00707">
    <property type="entry name" value="UPF0735"/>
    <property type="match status" value="1"/>
</dbReference>
<dbReference type="InterPro" id="IPR045865">
    <property type="entry name" value="ACT-like_dom_sf"/>
</dbReference>
<dbReference type="InterPro" id="IPR002912">
    <property type="entry name" value="ACT_dom"/>
</dbReference>
<dbReference type="InterPro" id="IPR008310">
    <property type="entry name" value="UPF0735_ACT_dom-cont"/>
</dbReference>
<dbReference type="NCBIfam" id="NF003361">
    <property type="entry name" value="PRK04435.1"/>
    <property type="match status" value="1"/>
</dbReference>
<dbReference type="Pfam" id="PF13291">
    <property type="entry name" value="ACT_4"/>
    <property type="match status" value="1"/>
</dbReference>
<dbReference type="PIRSF" id="PIRSF025624">
    <property type="entry name" value="ACT_PheB"/>
    <property type="match status" value="1"/>
</dbReference>
<dbReference type="SUPFAM" id="SSF55021">
    <property type="entry name" value="ACT-like"/>
    <property type="match status" value="1"/>
</dbReference>
<dbReference type="PROSITE" id="PS51671">
    <property type="entry name" value="ACT"/>
    <property type="match status" value="1"/>
</dbReference>
<accession>B1IM08</accession>
<proteinExistence type="inferred from homology"/>
<organism>
    <name type="scientific">Clostridium botulinum (strain Okra / Type B1)</name>
    <dbReference type="NCBI Taxonomy" id="498213"/>
    <lineage>
        <taxon>Bacteria</taxon>
        <taxon>Bacillati</taxon>
        <taxon>Bacillota</taxon>
        <taxon>Clostridia</taxon>
        <taxon>Eubacteriales</taxon>
        <taxon>Clostridiaceae</taxon>
        <taxon>Clostridium</taxon>
    </lineage>
</organism>
<comment type="similarity">
    <text evidence="1">Belongs to the UPF0735 family.</text>
</comment>
<evidence type="ECO:0000255" key="1">
    <source>
        <dbReference type="HAMAP-Rule" id="MF_00707"/>
    </source>
</evidence>
<protein>
    <recommendedName>
        <fullName evidence="1">UPF0735 ACT domain-containing protein CLD_1535</fullName>
    </recommendedName>
</protein>
<sequence>MPNKFLIIDNSILPDIFEKVVKVKELLANGKVKDITEGVKTVGISRSTYYKYKDFVFSVSEGVKSQKATIGLLLGHERGTLSKILDRIAEYQGNILTINQDIPINNTANVSITFDISQMSIGLKELVEEIKNTKNVIKVDLIAME</sequence>